<keyword id="KW-0025">Alternative splicing</keyword>
<keyword id="KW-0349">Heme</keyword>
<keyword id="KW-0408">Iron</keyword>
<keyword id="KW-0472">Membrane</keyword>
<keyword id="KW-0479">Metal-binding</keyword>
<keyword id="KW-0503">Monooxygenase</keyword>
<keyword id="KW-0560">Oxidoreductase</keyword>
<keyword id="KW-1185">Reference proteome</keyword>
<keyword id="KW-0812">Transmembrane</keyword>
<keyword id="KW-1133">Transmembrane helix</keyword>
<sequence length="497" mass="56277">MEMTLMVSLCLTTLLTLLLLKKFLKRTAKKVNLPPSPWRIPVIGNLHQLSLHPHRSLHSLSLRYGPLMLLHFGRVPILVVSSSEAAHEILKTHDLKFANRPKSKAVHGLMNGGRDVVFGPYGEYWRQMKSVCILNLLTNKMVASFEKVREEEVNAMMEKLEKASCSSSAENLSELFVTLTSDVTSRVSLGKKYWEDETAGGLKKRVRQIMELLREFPIGDYVPALAWIDRINGFNSKIVEVSRAYSDLMEKVVQEHLEAGEHKADFVNILLSIEKEKNNGFKVQRNDIKFMILDMFIGGISTSSTLLEWIMTELIRNPECMKKLQNEIRSTIRPHGSYIKEKEVENMRYLKAVIKEVFRVHPPLPLILPRLLTEDVKVKGYDIAAGTEVLINAWSIHRDPAIWGPDAEEFKPERHLDSTLDYHGQDLKYIPFGSGRRICPGINLAMGLVEVTLANLVGRFDWSVDPGPNGDQPDLAEDFGLDVCRKNPLIAFPSSVA</sequence>
<feature type="chain" id="PRO_0000052068" description="Cytochrome P450 71A18">
    <location>
        <begin position="1"/>
        <end position="497"/>
    </location>
</feature>
<feature type="transmembrane region" description="Helical" evidence="2">
    <location>
        <begin position="4"/>
        <end position="24"/>
    </location>
</feature>
<feature type="binding site" description="axial binding residue" evidence="1">
    <location>
        <position position="439"/>
    </location>
    <ligand>
        <name>heme</name>
        <dbReference type="ChEBI" id="CHEBI:30413"/>
    </ligand>
    <ligandPart>
        <name>Fe</name>
        <dbReference type="ChEBI" id="CHEBI:18248"/>
    </ligandPart>
</feature>
<accession>Q9SAB6</accession>
<name>C71AI_ARATH</name>
<comment type="cofactor">
    <cofactor evidence="1">
        <name>heme</name>
        <dbReference type="ChEBI" id="CHEBI:30413"/>
    </cofactor>
</comment>
<comment type="subcellular location">
    <subcellularLocation>
        <location evidence="3">Membrane</location>
        <topology evidence="3">Single-pass membrane protein</topology>
    </subcellularLocation>
</comment>
<comment type="alternative products">
    <event type="alternative splicing"/>
    <isoform>
        <id>Q9SAB6-1</id>
        <name>1</name>
        <sequence type="displayed"/>
    </isoform>
    <text>A number of isoforms are produced. According to EST sequences.</text>
</comment>
<comment type="similarity">
    <text evidence="3">Belongs to the cytochrome P450 family.</text>
</comment>
<comment type="sequence caution" evidence="3">
    <conflict type="erroneous gene model prediction">
        <sequence resource="EMBL-CDS" id="AAD30262"/>
    </conflict>
</comment>
<evidence type="ECO:0000250" key="1"/>
<evidence type="ECO:0000255" key="2"/>
<evidence type="ECO:0000305" key="3"/>
<organism>
    <name type="scientific">Arabidopsis thaliana</name>
    <name type="common">Mouse-ear cress</name>
    <dbReference type="NCBI Taxonomy" id="3702"/>
    <lineage>
        <taxon>Eukaryota</taxon>
        <taxon>Viridiplantae</taxon>
        <taxon>Streptophyta</taxon>
        <taxon>Embryophyta</taxon>
        <taxon>Tracheophyta</taxon>
        <taxon>Spermatophyta</taxon>
        <taxon>Magnoliopsida</taxon>
        <taxon>eudicotyledons</taxon>
        <taxon>Gunneridae</taxon>
        <taxon>Pentapetalae</taxon>
        <taxon>rosids</taxon>
        <taxon>malvids</taxon>
        <taxon>Brassicales</taxon>
        <taxon>Brassicaceae</taxon>
        <taxon>Camelineae</taxon>
        <taxon>Arabidopsis</taxon>
    </lineage>
</organism>
<dbReference type="EC" id="1.14.-.-"/>
<dbReference type="EMBL" id="AC007296">
    <property type="protein sequence ID" value="AAD30262.1"/>
    <property type="status" value="ALT_SEQ"/>
    <property type="molecule type" value="Genomic_DNA"/>
</dbReference>
<dbReference type="EMBL" id="CP002684">
    <property type="protein sequence ID" value="AEE28760.1"/>
    <property type="molecule type" value="Genomic_DNA"/>
</dbReference>
<dbReference type="PIR" id="E86249">
    <property type="entry name" value="E86249"/>
</dbReference>
<dbReference type="RefSeq" id="NP_172627.2">
    <molecule id="Q9SAB6-1"/>
    <property type="nucleotide sequence ID" value="NM_101034.3"/>
</dbReference>
<dbReference type="SMR" id="Q9SAB6"/>
<dbReference type="FunCoup" id="Q9SAB6">
    <property type="interactions" value="184"/>
</dbReference>
<dbReference type="STRING" id="3702.Q9SAB6"/>
<dbReference type="PaxDb" id="3702-AT1G11610.2"/>
<dbReference type="ProteomicsDB" id="240485">
    <molecule id="Q9SAB6-1"/>
</dbReference>
<dbReference type="EnsemblPlants" id="AT1G11610.1">
    <molecule id="Q9SAB6-1"/>
    <property type="protein sequence ID" value="AT1G11610.1"/>
    <property type="gene ID" value="AT1G11610"/>
</dbReference>
<dbReference type="GeneID" id="837705"/>
<dbReference type="Gramene" id="AT1G11610.1">
    <molecule id="Q9SAB6-1"/>
    <property type="protein sequence ID" value="AT1G11610.1"/>
    <property type="gene ID" value="AT1G11610"/>
</dbReference>
<dbReference type="KEGG" id="ath:AT1G11610"/>
<dbReference type="Araport" id="AT1G11610"/>
<dbReference type="TAIR" id="AT1G11610">
    <property type="gene designation" value="CYP71A18"/>
</dbReference>
<dbReference type="eggNOG" id="KOG0156">
    <property type="taxonomic scope" value="Eukaryota"/>
</dbReference>
<dbReference type="HOGENOM" id="CLU_001570_4_0_1"/>
<dbReference type="InParanoid" id="Q9SAB6"/>
<dbReference type="OMA" id="ISTHIPR"/>
<dbReference type="PhylomeDB" id="Q9SAB6"/>
<dbReference type="PRO" id="PR:Q9SAB6"/>
<dbReference type="Proteomes" id="UP000006548">
    <property type="component" value="Chromosome 1"/>
</dbReference>
<dbReference type="ExpressionAtlas" id="Q9SAB6">
    <property type="expression patterns" value="baseline and differential"/>
</dbReference>
<dbReference type="GO" id="GO:0016020">
    <property type="term" value="C:membrane"/>
    <property type="evidence" value="ECO:0007669"/>
    <property type="project" value="UniProtKB-SubCell"/>
</dbReference>
<dbReference type="GO" id="GO:0020037">
    <property type="term" value="F:heme binding"/>
    <property type="evidence" value="ECO:0007669"/>
    <property type="project" value="InterPro"/>
</dbReference>
<dbReference type="GO" id="GO:0005506">
    <property type="term" value="F:iron ion binding"/>
    <property type="evidence" value="ECO:0007669"/>
    <property type="project" value="InterPro"/>
</dbReference>
<dbReference type="GO" id="GO:0004497">
    <property type="term" value="F:monooxygenase activity"/>
    <property type="evidence" value="ECO:0007669"/>
    <property type="project" value="UniProtKB-KW"/>
</dbReference>
<dbReference type="GO" id="GO:0016705">
    <property type="term" value="F:oxidoreductase activity, acting on paired donors, with incorporation or reduction of molecular oxygen"/>
    <property type="evidence" value="ECO:0007669"/>
    <property type="project" value="InterPro"/>
</dbReference>
<dbReference type="CDD" id="cd11072">
    <property type="entry name" value="CYP71-like"/>
    <property type="match status" value="1"/>
</dbReference>
<dbReference type="FunFam" id="1.10.630.10:FF:000011">
    <property type="entry name" value="Cytochrome P450 83B1"/>
    <property type="match status" value="1"/>
</dbReference>
<dbReference type="Gene3D" id="1.10.630.10">
    <property type="entry name" value="Cytochrome P450"/>
    <property type="match status" value="1"/>
</dbReference>
<dbReference type="InterPro" id="IPR001128">
    <property type="entry name" value="Cyt_P450"/>
</dbReference>
<dbReference type="InterPro" id="IPR017972">
    <property type="entry name" value="Cyt_P450_CS"/>
</dbReference>
<dbReference type="InterPro" id="IPR002401">
    <property type="entry name" value="Cyt_P450_E_grp-I"/>
</dbReference>
<dbReference type="InterPro" id="IPR036396">
    <property type="entry name" value="Cyt_P450_sf"/>
</dbReference>
<dbReference type="PANTHER" id="PTHR47955:SF15">
    <property type="entry name" value="CYTOCHROME P450 71A2-LIKE"/>
    <property type="match status" value="1"/>
</dbReference>
<dbReference type="PANTHER" id="PTHR47955">
    <property type="entry name" value="CYTOCHROME P450 FAMILY 71 PROTEIN"/>
    <property type="match status" value="1"/>
</dbReference>
<dbReference type="Pfam" id="PF00067">
    <property type="entry name" value="p450"/>
    <property type="match status" value="1"/>
</dbReference>
<dbReference type="PRINTS" id="PR00463">
    <property type="entry name" value="EP450I"/>
</dbReference>
<dbReference type="PRINTS" id="PR00385">
    <property type="entry name" value="P450"/>
</dbReference>
<dbReference type="SUPFAM" id="SSF48264">
    <property type="entry name" value="Cytochrome P450"/>
    <property type="match status" value="1"/>
</dbReference>
<dbReference type="PROSITE" id="PS00086">
    <property type="entry name" value="CYTOCHROME_P450"/>
    <property type="match status" value="1"/>
</dbReference>
<protein>
    <recommendedName>
        <fullName>Cytochrome P450 71A18</fullName>
        <ecNumber>1.14.-.-</ecNumber>
    </recommendedName>
</protein>
<gene>
    <name type="primary">CYP71A18</name>
    <name type="ordered locus">At1g11610</name>
    <name type="ORF">F25C20.24</name>
</gene>
<proteinExistence type="inferred from homology"/>
<reference key="1">
    <citation type="journal article" date="2000" name="Nature">
        <title>Sequence and analysis of chromosome 1 of the plant Arabidopsis thaliana.</title>
        <authorList>
            <person name="Theologis A."/>
            <person name="Ecker J.R."/>
            <person name="Palm C.J."/>
            <person name="Federspiel N.A."/>
            <person name="Kaul S."/>
            <person name="White O."/>
            <person name="Alonso J."/>
            <person name="Altafi H."/>
            <person name="Araujo R."/>
            <person name="Bowman C.L."/>
            <person name="Brooks S.Y."/>
            <person name="Buehler E."/>
            <person name="Chan A."/>
            <person name="Chao Q."/>
            <person name="Chen H."/>
            <person name="Cheuk R.F."/>
            <person name="Chin C.W."/>
            <person name="Chung M.K."/>
            <person name="Conn L."/>
            <person name="Conway A.B."/>
            <person name="Conway A.R."/>
            <person name="Creasy T.H."/>
            <person name="Dewar K."/>
            <person name="Dunn P."/>
            <person name="Etgu P."/>
            <person name="Feldblyum T.V."/>
            <person name="Feng J.-D."/>
            <person name="Fong B."/>
            <person name="Fujii C.Y."/>
            <person name="Gill J.E."/>
            <person name="Goldsmith A.D."/>
            <person name="Haas B."/>
            <person name="Hansen N.F."/>
            <person name="Hughes B."/>
            <person name="Huizar L."/>
            <person name="Hunter J.L."/>
            <person name="Jenkins J."/>
            <person name="Johnson-Hopson C."/>
            <person name="Khan S."/>
            <person name="Khaykin E."/>
            <person name="Kim C.J."/>
            <person name="Koo H.L."/>
            <person name="Kremenetskaia I."/>
            <person name="Kurtz D.B."/>
            <person name="Kwan A."/>
            <person name="Lam B."/>
            <person name="Langin-Hooper S."/>
            <person name="Lee A."/>
            <person name="Lee J.M."/>
            <person name="Lenz C.A."/>
            <person name="Li J.H."/>
            <person name="Li Y.-P."/>
            <person name="Lin X."/>
            <person name="Liu S.X."/>
            <person name="Liu Z.A."/>
            <person name="Luros J.S."/>
            <person name="Maiti R."/>
            <person name="Marziali A."/>
            <person name="Militscher J."/>
            <person name="Miranda M."/>
            <person name="Nguyen M."/>
            <person name="Nierman W.C."/>
            <person name="Osborne B.I."/>
            <person name="Pai G."/>
            <person name="Peterson J."/>
            <person name="Pham P.K."/>
            <person name="Rizzo M."/>
            <person name="Rooney T."/>
            <person name="Rowley D."/>
            <person name="Sakano H."/>
            <person name="Salzberg S.L."/>
            <person name="Schwartz J.R."/>
            <person name="Shinn P."/>
            <person name="Southwick A.M."/>
            <person name="Sun H."/>
            <person name="Tallon L.J."/>
            <person name="Tambunga G."/>
            <person name="Toriumi M.J."/>
            <person name="Town C.D."/>
            <person name="Utterback T."/>
            <person name="Van Aken S."/>
            <person name="Vaysberg M."/>
            <person name="Vysotskaia V.S."/>
            <person name="Walker M."/>
            <person name="Wu D."/>
            <person name="Yu G."/>
            <person name="Fraser C.M."/>
            <person name="Venter J.C."/>
            <person name="Davis R.W."/>
        </authorList>
    </citation>
    <scope>NUCLEOTIDE SEQUENCE [LARGE SCALE GENOMIC DNA]</scope>
    <source>
        <strain>cv. Columbia</strain>
    </source>
</reference>
<reference key="2">
    <citation type="journal article" date="2017" name="Plant J.">
        <title>Araport11: a complete reannotation of the Arabidopsis thaliana reference genome.</title>
        <authorList>
            <person name="Cheng C.Y."/>
            <person name="Krishnakumar V."/>
            <person name="Chan A.P."/>
            <person name="Thibaud-Nissen F."/>
            <person name="Schobel S."/>
            <person name="Town C.D."/>
        </authorList>
    </citation>
    <scope>GENOME REANNOTATION</scope>
    <source>
        <strain>cv. Columbia</strain>
    </source>
</reference>